<comment type="function">
    <text evidence="1">Involved in protein export. Acts as a chaperone by maintaining the newly synthesized protein in an open conformation. Functions as a peptidyl-prolyl cis-trans isomerase.</text>
</comment>
<comment type="catalytic activity">
    <reaction evidence="1">
        <text>[protein]-peptidylproline (omega=180) = [protein]-peptidylproline (omega=0)</text>
        <dbReference type="Rhea" id="RHEA:16237"/>
        <dbReference type="Rhea" id="RHEA-COMP:10747"/>
        <dbReference type="Rhea" id="RHEA-COMP:10748"/>
        <dbReference type="ChEBI" id="CHEBI:83833"/>
        <dbReference type="ChEBI" id="CHEBI:83834"/>
        <dbReference type="EC" id="5.2.1.8"/>
    </reaction>
</comment>
<comment type="subcellular location">
    <subcellularLocation>
        <location>Cytoplasm</location>
    </subcellularLocation>
    <text evidence="1">About half TF is bound to the ribosome near the polypeptide exit tunnel while the other half is free in the cytoplasm.</text>
</comment>
<comment type="domain">
    <text evidence="1">Consists of 3 domains; the N-terminus binds the ribosome, the middle domain has PPIase activity, while the C-terminus has intrinsic chaperone activity on its own.</text>
</comment>
<comment type="similarity">
    <text evidence="1">Belongs to the FKBP-type PPIase family. Tig subfamily.</text>
</comment>
<name>TIG_BACP2</name>
<accession>A8FFW0</accession>
<dbReference type="EC" id="5.2.1.8" evidence="1"/>
<dbReference type="EMBL" id="CP000813">
    <property type="protein sequence ID" value="ABV63127.1"/>
    <property type="molecule type" value="Genomic_DNA"/>
</dbReference>
<dbReference type="RefSeq" id="WP_012010786.1">
    <property type="nucleotide sequence ID" value="NZ_VEIS01000010.1"/>
</dbReference>
<dbReference type="SMR" id="A8FFW0"/>
<dbReference type="STRING" id="315750.BPUM_2464"/>
<dbReference type="GeneID" id="5621728"/>
<dbReference type="KEGG" id="bpu:BPUM_2464"/>
<dbReference type="eggNOG" id="COG0544">
    <property type="taxonomic scope" value="Bacteria"/>
</dbReference>
<dbReference type="HOGENOM" id="CLU_033058_3_2_9"/>
<dbReference type="OrthoDB" id="9767721at2"/>
<dbReference type="Proteomes" id="UP000001355">
    <property type="component" value="Chromosome"/>
</dbReference>
<dbReference type="GO" id="GO:0005737">
    <property type="term" value="C:cytoplasm"/>
    <property type="evidence" value="ECO:0007669"/>
    <property type="project" value="UniProtKB-SubCell"/>
</dbReference>
<dbReference type="GO" id="GO:0003755">
    <property type="term" value="F:peptidyl-prolyl cis-trans isomerase activity"/>
    <property type="evidence" value="ECO:0007669"/>
    <property type="project" value="UniProtKB-UniRule"/>
</dbReference>
<dbReference type="GO" id="GO:0044183">
    <property type="term" value="F:protein folding chaperone"/>
    <property type="evidence" value="ECO:0007669"/>
    <property type="project" value="TreeGrafter"/>
</dbReference>
<dbReference type="GO" id="GO:0043022">
    <property type="term" value="F:ribosome binding"/>
    <property type="evidence" value="ECO:0007669"/>
    <property type="project" value="TreeGrafter"/>
</dbReference>
<dbReference type="GO" id="GO:0051083">
    <property type="term" value="P:'de novo' cotranslational protein folding"/>
    <property type="evidence" value="ECO:0007669"/>
    <property type="project" value="TreeGrafter"/>
</dbReference>
<dbReference type="GO" id="GO:0051301">
    <property type="term" value="P:cell division"/>
    <property type="evidence" value="ECO:0007669"/>
    <property type="project" value="UniProtKB-KW"/>
</dbReference>
<dbReference type="GO" id="GO:0061077">
    <property type="term" value="P:chaperone-mediated protein folding"/>
    <property type="evidence" value="ECO:0007669"/>
    <property type="project" value="TreeGrafter"/>
</dbReference>
<dbReference type="GO" id="GO:0015031">
    <property type="term" value="P:protein transport"/>
    <property type="evidence" value="ECO:0007669"/>
    <property type="project" value="UniProtKB-UniRule"/>
</dbReference>
<dbReference type="GO" id="GO:0043335">
    <property type="term" value="P:protein unfolding"/>
    <property type="evidence" value="ECO:0007669"/>
    <property type="project" value="TreeGrafter"/>
</dbReference>
<dbReference type="FunFam" id="3.10.50.40:FF:000001">
    <property type="entry name" value="Trigger factor"/>
    <property type="match status" value="1"/>
</dbReference>
<dbReference type="FunFam" id="3.30.70.1050:FF:000002">
    <property type="entry name" value="Trigger factor"/>
    <property type="match status" value="1"/>
</dbReference>
<dbReference type="Gene3D" id="3.10.50.40">
    <property type="match status" value="1"/>
</dbReference>
<dbReference type="Gene3D" id="3.30.70.1050">
    <property type="entry name" value="Trigger factor ribosome-binding domain"/>
    <property type="match status" value="1"/>
</dbReference>
<dbReference type="Gene3D" id="1.10.3120.10">
    <property type="entry name" value="Trigger factor, C-terminal domain"/>
    <property type="match status" value="1"/>
</dbReference>
<dbReference type="HAMAP" id="MF_00303">
    <property type="entry name" value="Trigger_factor_Tig"/>
    <property type="match status" value="1"/>
</dbReference>
<dbReference type="InterPro" id="IPR046357">
    <property type="entry name" value="PPIase_dom_sf"/>
</dbReference>
<dbReference type="InterPro" id="IPR001179">
    <property type="entry name" value="PPIase_FKBP_dom"/>
</dbReference>
<dbReference type="InterPro" id="IPR005215">
    <property type="entry name" value="Trig_fac"/>
</dbReference>
<dbReference type="InterPro" id="IPR008880">
    <property type="entry name" value="Trigger_fac_C"/>
</dbReference>
<dbReference type="InterPro" id="IPR037041">
    <property type="entry name" value="Trigger_fac_C_sf"/>
</dbReference>
<dbReference type="InterPro" id="IPR008881">
    <property type="entry name" value="Trigger_fac_ribosome-bd_bac"/>
</dbReference>
<dbReference type="InterPro" id="IPR036611">
    <property type="entry name" value="Trigger_fac_ribosome-bd_sf"/>
</dbReference>
<dbReference type="InterPro" id="IPR027304">
    <property type="entry name" value="Trigger_fact/SurA_dom_sf"/>
</dbReference>
<dbReference type="NCBIfam" id="TIGR00115">
    <property type="entry name" value="tig"/>
    <property type="match status" value="1"/>
</dbReference>
<dbReference type="PANTHER" id="PTHR30560">
    <property type="entry name" value="TRIGGER FACTOR CHAPERONE AND PEPTIDYL-PROLYL CIS/TRANS ISOMERASE"/>
    <property type="match status" value="1"/>
</dbReference>
<dbReference type="PANTHER" id="PTHR30560:SF3">
    <property type="entry name" value="TRIGGER FACTOR-LIKE PROTEIN TIG, CHLOROPLASTIC"/>
    <property type="match status" value="1"/>
</dbReference>
<dbReference type="Pfam" id="PF00254">
    <property type="entry name" value="FKBP_C"/>
    <property type="match status" value="1"/>
</dbReference>
<dbReference type="Pfam" id="PF05698">
    <property type="entry name" value="Trigger_C"/>
    <property type="match status" value="1"/>
</dbReference>
<dbReference type="Pfam" id="PF05697">
    <property type="entry name" value="Trigger_N"/>
    <property type="match status" value="1"/>
</dbReference>
<dbReference type="PIRSF" id="PIRSF003095">
    <property type="entry name" value="Trigger_factor"/>
    <property type="match status" value="1"/>
</dbReference>
<dbReference type="SUPFAM" id="SSF54534">
    <property type="entry name" value="FKBP-like"/>
    <property type="match status" value="1"/>
</dbReference>
<dbReference type="SUPFAM" id="SSF109998">
    <property type="entry name" value="Triger factor/SurA peptide-binding domain-like"/>
    <property type="match status" value="1"/>
</dbReference>
<dbReference type="SUPFAM" id="SSF102735">
    <property type="entry name" value="Trigger factor ribosome-binding domain"/>
    <property type="match status" value="1"/>
</dbReference>
<dbReference type="PROSITE" id="PS50059">
    <property type="entry name" value="FKBP_PPIASE"/>
    <property type="match status" value="1"/>
</dbReference>
<gene>
    <name evidence="1" type="primary">tig</name>
    <name type="ordered locus">BPUM_2464</name>
</gene>
<evidence type="ECO:0000255" key="1">
    <source>
        <dbReference type="HAMAP-Rule" id="MF_00303"/>
    </source>
</evidence>
<organism>
    <name type="scientific">Bacillus pumilus (strain SAFR-032)</name>
    <dbReference type="NCBI Taxonomy" id="315750"/>
    <lineage>
        <taxon>Bacteria</taxon>
        <taxon>Bacillati</taxon>
        <taxon>Bacillota</taxon>
        <taxon>Bacilli</taxon>
        <taxon>Bacillales</taxon>
        <taxon>Bacillaceae</taxon>
        <taxon>Bacillus</taxon>
    </lineage>
</organism>
<keyword id="KW-0131">Cell cycle</keyword>
<keyword id="KW-0132">Cell division</keyword>
<keyword id="KW-0143">Chaperone</keyword>
<keyword id="KW-0963">Cytoplasm</keyword>
<keyword id="KW-0413">Isomerase</keyword>
<keyword id="KW-0697">Rotamase</keyword>
<protein>
    <recommendedName>
        <fullName evidence="1">Trigger factor</fullName>
        <shortName evidence="1">TF</shortName>
        <ecNumber evidence="1">5.2.1.8</ecNumber>
    </recommendedName>
    <alternativeName>
        <fullName evidence="1">PPIase</fullName>
    </alternativeName>
</protein>
<feature type="chain" id="PRO_1000059324" description="Trigger factor">
    <location>
        <begin position="1"/>
        <end position="424"/>
    </location>
</feature>
<feature type="domain" description="PPIase FKBP-type" evidence="1">
    <location>
        <begin position="163"/>
        <end position="248"/>
    </location>
</feature>
<reference key="1">
    <citation type="journal article" date="2007" name="PLoS ONE">
        <title>Paradoxical DNA repair and peroxide resistance gene conservation in Bacillus pumilus SAFR-032.</title>
        <authorList>
            <person name="Gioia J."/>
            <person name="Yerrapragada S."/>
            <person name="Qin X."/>
            <person name="Jiang H."/>
            <person name="Igboeli O.C."/>
            <person name="Muzny D."/>
            <person name="Dugan-Rocha S."/>
            <person name="Ding Y."/>
            <person name="Hawes A."/>
            <person name="Liu W."/>
            <person name="Perez L."/>
            <person name="Kovar C."/>
            <person name="Dinh H."/>
            <person name="Lee S."/>
            <person name="Nazareth L."/>
            <person name="Blyth P."/>
            <person name="Holder M."/>
            <person name="Buhay C."/>
            <person name="Tirumalai M.R."/>
            <person name="Liu Y."/>
            <person name="Dasgupta I."/>
            <person name="Bokhetache L."/>
            <person name="Fujita M."/>
            <person name="Karouia F."/>
            <person name="Eswara Moorthy P."/>
            <person name="Siefert J."/>
            <person name="Uzman A."/>
            <person name="Buzumbo P."/>
            <person name="Verma A."/>
            <person name="Zwiya H."/>
            <person name="McWilliams B.D."/>
            <person name="Olowu A."/>
            <person name="Clinkenbeard K.D."/>
            <person name="Newcombe D."/>
            <person name="Golebiewski L."/>
            <person name="Petrosino J.F."/>
            <person name="Nicholson W.L."/>
            <person name="Fox G.E."/>
            <person name="Venkateswaran K."/>
            <person name="Highlander S.K."/>
            <person name="Weinstock G.M."/>
        </authorList>
    </citation>
    <scope>NUCLEOTIDE SEQUENCE [LARGE SCALE GENOMIC DNA]</scope>
    <source>
        <strain>SAFR-032</strain>
    </source>
</reference>
<sequence length="424" mass="47527">MSVKWEKQEGNEGVLTVEVDAETFNKALDDAFKKVVKQVSIPGFRKGKVPRGLFEQRFGVESLYQDALDILLPVEYPKAIDEAGIDPVDRPEIDVEKIEKGESLIFTAKVTVKPEVKLGDYKGLNVEKDDATVTDEDVQEELKGMQNRQAELVVKEEGAIENGDTVVLDFEGFVDGEAFEGGKAENYSLEVGSGSFIPGFEEQLVGLEAGAEKDVEVTFPEEYHAEDLAGKPAVFKVKIHEIKAKELPALDDEFAKDVDEEVETLAELTEKTKKRLEEAKENEAEGKLREELVEKASENAEVDIPQAMVDTELDRMMKEFEQRLQMQGMNLELYFQFSGQDEDALKEQMKEDAAKRVKSNLTLEAIAAAENLQVSDEEVEEELSKMAEAYNMPIENIKQAIGSTEAMKEDLKVRKAIDFLVENR</sequence>
<proteinExistence type="inferred from homology"/>